<accession>O05642</accession>
<accession>Q4JB61</accession>
<keyword id="KW-0002">3D-structure</keyword>
<keyword id="KW-1185">Reference proteome</keyword>
<keyword id="KW-0687">Ribonucleoprotein</keyword>
<keyword id="KW-0689">Ribosomal protein</keyword>
<proteinExistence type="evidence at protein level"/>
<evidence type="ECO:0000255" key="1">
    <source>
        <dbReference type="HAMAP-Rule" id="MF_01371"/>
    </source>
</evidence>
<evidence type="ECO:0000305" key="2"/>
<name>RL30_SULAC</name>
<dbReference type="EMBL" id="Y07778">
    <property type="protein sequence ID" value="CAA69098.1"/>
    <property type="molecule type" value="Genomic_DNA"/>
</dbReference>
<dbReference type="EMBL" id="CP000077">
    <property type="protein sequence ID" value="AAY79968.1"/>
    <property type="molecule type" value="Genomic_DNA"/>
</dbReference>
<dbReference type="RefSeq" id="WP_011277470.1">
    <property type="nucleotide sequence ID" value="NC_007181.1"/>
</dbReference>
<dbReference type="PDB" id="8HKU">
    <property type="method" value="EM"/>
    <property type="resolution" value="2.72 A"/>
    <property type="chains" value="L30P=1-155"/>
</dbReference>
<dbReference type="PDB" id="8HKV">
    <property type="method" value="EM"/>
    <property type="resolution" value="4.94 A"/>
    <property type="chains" value="L30P=1-155"/>
</dbReference>
<dbReference type="PDB" id="8HKY">
    <property type="method" value="EM"/>
    <property type="resolution" value="4.45 A"/>
    <property type="chains" value="L30P=1-155"/>
</dbReference>
<dbReference type="PDB" id="8HKZ">
    <property type="method" value="EM"/>
    <property type="resolution" value="4.78 A"/>
    <property type="chains" value="L30P=1-155"/>
</dbReference>
<dbReference type="PDB" id="8HL1">
    <property type="method" value="EM"/>
    <property type="resolution" value="3.93 A"/>
    <property type="chains" value="L30P=1-155"/>
</dbReference>
<dbReference type="PDB" id="8HL2">
    <property type="method" value="EM"/>
    <property type="resolution" value="4.10 A"/>
    <property type="chains" value="L30P=1-155"/>
</dbReference>
<dbReference type="PDB" id="8HL3">
    <property type="method" value="EM"/>
    <property type="resolution" value="4.80 A"/>
    <property type="chains" value="L30P=1-155"/>
</dbReference>
<dbReference type="PDB" id="8HL4">
    <property type="method" value="EM"/>
    <property type="resolution" value="4.62 A"/>
    <property type="chains" value="L30P=1-155"/>
</dbReference>
<dbReference type="PDB" id="8HL5">
    <property type="method" value="EM"/>
    <property type="resolution" value="5.72 A"/>
    <property type="chains" value="L30P=1-155"/>
</dbReference>
<dbReference type="PDBsum" id="8HKU"/>
<dbReference type="PDBsum" id="8HKV"/>
<dbReference type="PDBsum" id="8HKY"/>
<dbReference type="PDBsum" id="8HKZ"/>
<dbReference type="PDBsum" id="8HL1"/>
<dbReference type="PDBsum" id="8HL2"/>
<dbReference type="PDBsum" id="8HL3"/>
<dbReference type="PDBsum" id="8HL4"/>
<dbReference type="PDBsum" id="8HL5"/>
<dbReference type="EMDB" id="EMD-34860"/>
<dbReference type="EMDB" id="EMD-34861"/>
<dbReference type="EMDB" id="EMD-34863"/>
<dbReference type="EMDB" id="EMD-34864"/>
<dbReference type="EMDB" id="EMD-34866"/>
<dbReference type="EMDB" id="EMD-34867"/>
<dbReference type="EMDB" id="EMD-34868"/>
<dbReference type="EMDB" id="EMD-34869"/>
<dbReference type="EMDB" id="EMD-34870"/>
<dbReference type="SMR" id="O05642"/>
<dbReference type="STRING" id="330779.Saci_0576"/>
<dbReference type="GeneID" id="14551097"/>
<dbReference type="KEGG" id="sai:Saci_0576"/>
<dbReference type="PATRIC" id="fig|330779.12.peg.555"/>
<dbReference type="eggNOG" id="arCOG04086">
    <property type="taxonomic scope" value="Archaea"/>
</dbReference>
<dbReference type="HOGENOM" id="CLU_055156_6_0_2"/>
<dbReference type="Proteomes" id="UP000001018">
    <property type="component" value="Chromosome"/>
</dbReference>
<dbReference type="GO" id="GO:0022625">
    <property type="term" value="C:cytosolic large ribosomal subunit"/>
    <property type="evidence" value="ECO:0007669"/>
    <property type="project" value="TreeGrafter"/>
</dbReference>
<dbReference type="GO" id="GO:0003723">
    <property type="term" value="F:RNA binding"/>
    <property type="evidence" value="ECO:0007669"/>
    <property type="project" value="TreeGrafter"/>
</dbReference>
<dbReference type="GO" id="GO:0003735">
    <property type="term" value="F:structural constituent of ribosome"/>
    <property type="evidence" value="ECO:0007669"/>
    <property type="project" value="InterPro"/>
</dbReference>
<dbReference type="GO" id="GO:0000463">
    <property type="term" value="P:maturation of LSU-rRNA from tricistronic rRNA transcript (SSU-rRNA, 5.8S rRNA, LSU-rRNA)"/>
    <property type="evidence" value="ECO:0007669"/>
    <property type="project" value="TreeGrafter"/>
</dbReference>
<dbReference type="GO" id="GO:0006412">
    <property type="term" value="P:translation"/>
    <property type="evidence" value="ECO:0007669"/>
    <property type="project" value="UniProtKB-UniRule"/>
</dbReference>
<dbReference type="CDD" id="cd01657">
    <property type="entry name" value="Ribosomal_L7_archeal_euk"/>
    <property type="match status" value="1"/>
</dbReference>
<dbReference type="Gene3D" id="1.10.15.30">
    <property type="match status" value="1"/>
</dbReference>
<dbReference type="Gene3D" id="3.30.1390.20">
    <property type="entry name" value="Ribosomal protein L30, ferredoxin-like fold domain"/>
    <property type="match status" value="1"/>
</dbReference>
<dbReference type="HAMAP" id="MF_01371_A">
    <property type="entry name" value="Ribosomal_uL30_A"/>
    <property type="match status" value="1"/>
</dbReference>
<dbReference type="InterPro" id="IPR036919">
    <property type="entry name" value="Ribo_uL30_ferredoxin-like_sf"/>
</dbReference>
<dbReference type="InterPro" id="IPR039699">
    <property type="entry name" value="Ribosomal_uL30"/>
</dbReference>
<dbReference type="InterPro" id="IPR005997">
    <property type="entry name" value="Ribosomal_uL30_arc"/>
</dbReference>
<dbReference type="InterPro" id="IPR035808">
    <property type="entry name" value="Ribosomal_uL30_euk_arc"/>
</dbReference>
<dbReference type="InterPro" id="IPR016082">
    <property type="entry name" value="Ribosomal_uL30_ferredoxin-like"/>
</dbReference>
<dbReference type="NCBIfam" id="NF004711">
    <property type="entry name" value="PRK06049.1"/>
    <property type="match status" value="1"/>
</dbReference>
<dbReference type="NCBIfam" id="TIGR01309">
    <property type="entry name" value="uL30_arch"/>
    <property type="match status" value="1"/>
</dbReference>
<dbReference type="PANTHER" id="PTHR11524">
    <property type="entry name" value="60S RIBOSOMAL PROTEIN L7"/>
    <property type="match status" value="1"/>
</dbReference>
<dbReference type="PANTHER" id="PTHR11524:SF16">
    <property type="entry name" value="LARGE RIBOSOMAL SUBUNIT PROTEIN UL30"/>
    <property type="match status" value="1"/>
</dbReference>
<dbReference type="Pfam" id="PF00327">
    <property type="entry name" value="Ribosomal_L30"/>
    <property type="match status" value="1"/>
</dbReference>
<dbReference type="SUPFAM" id="SSF55129">
    <property type="entry name" value="Ribosomal protein L30p/L7e"/>
    <property type="match status" value="1"/>
</dbReference>
<comment type="subunit">
    <text evidence="1">Part of the 50S ribosomal subunit.</text>
</comment>
<comment type="similarity">
    <text evidence="1">Belongs to the universal ribosomal protein uL30 family.</text>
</comment>
<protein>
    <recommendedName>
        <fullName evidence="1">Large ribosomal subunit protein uL30</fullName>
    </recommendedName>
    <alternativeName>
        <fullName evidence="2">50S ribosomal protein L30</fullName>
    </alternativeName>
</protein>
<reference key="1">
    <citation type="journal article" date="1999" name="Mol. Phylogenet. Evol.">
        <title>The structure and evolution of the ribosomal proteins encoded in the spc operon of the archaeon (Crenarchaeota) Sulfolobus acidocaldarius.</title>
        <authorList>
            <person name="Yang D."/>
            <person name="Kusser I."/>
            <person name="Koepke A.K."/>
            <person name="Koop B.F."/>
            <person name="Matheson A.T."/>
        </authorList>
    </citation>
    <scope>NUCLEOTIDE SEQUENCE [GENOMIC DNA]</scope>
    <source>
        <strain>ATCC 33909 / DSM 639 / JCM 8929 / NBRC 15157 / NCIMB 11770</strain>
    </source>
</reference>
<reference key="2">
    <citation type="journal article" date="2005" name="J. Bacteriol.">
        <title>The genome of Sulfolobus acidocaldarius, a model organism of the Crenarchaeota.</title>
        <authorList>
            <person name="Chen L."/>
            <person name="Bruegger K."/>
            <person name="Skovgaard M."/>
            <person name="Redder P."/>
            <person name="She Q."/>
            <person name="Torarinsson E."/>
            <person name="Greve B."/>
            <person name="Awayez M."/>
            <person name="Zibat A."/>
            <person name="Klenk H.-P."/>
            <person name="Garrett R.A."/>
        </authorList>
    </citation>
    <scope>NUCLEOTIDE SEQUENCE [LARGE SCALE GENOMIC DNA]</scope>
    <source>
        <strain>ATCC 33909 / DSM 639 / JCM 8929 / NBRC 15157 / NCIMB 11770</strain>
    </source>
</reference>
<gene>
    <name evidence="1" type="primary">rpl30</name>
    <name type="ordered locus">Saci_0576</name>
</gene>
<sequence>MNELIGVIRIRGWAATPWYIQDTLSMLRLKNAFNAMIYPKDSSIQGMLNLVSSYVTWGELNDEGLRLLVSKLEISRGKKVNEEYVKDKLNVDFQSFVESIKDGKLRLNKLDEIFSLPIRLHPPKGGFKGKVSRPFRAGGEFGYRGDKINELIRRMV</sequence>
<feature type="chain" id="PRO_0000104630" description="Large ribosomal subunit protein uL30">
    <location>
        <begin position="1"/>
        <end position="156"/>
    </location>
</feature>
<organism>
    <name type="scientific">Sulfolobus acidocaldarius (strain ATCC 33909 / DSM 639 / JCM 8929 / NBRC 15157 / NCIMB 11770)</name>
    <dbReference type="NCBI Taxonomy" id="330779"/>
    <lineage>
        <taxon>Archaea</taxon>
        <taxon>Thermoproteota</taxon>
        <taxon>Thermoprotei</taxon>
        <taxon>Sulfolobales</taxon>
        <taxon>Sulfolobaceae</taxon>
        <taxon>Sulfolobus</taxon>
    </lineage>
</organism>